<accession>Q739W8</accession>
<keyword id="KW-0238">DNA-binding</keyword>
<keyword id="KW-0804">Transcription</keyword>
<keyword id="KW-0805">Transcription regulation</keyword>
<sequence>MRDNTIGSLIWLRLIRFTNQSNQMSNEFLKRFDLTTAQFDVLLQIRTYQPLTQMELAEKVTVTQGGISRMLTRLEKEGYIVRKQDWKTKTISLTEQGEAALERALPEQLAFQSSFFDDVLNEEEQKMLYELMTKVHKHSEKKELPQE</sequence>
<name>Y2019_BACC1</name>
<reference key="1">
    <citation type="journal article" date="2004" name="Nucleic Acids Res.">
        <title>The genome sequence of Bacillus cereus ATCC 10987 reveals metabolic adaptations and a large plasmid related to Bacillus anthracis pXO1.</title>
        <authorList>
            <person name="Rasko D.A."/>
            <person name="Ravel J."/>
            <person name="Oekstad O.A."/>
            <person name="Helgason E."/>
            <person name="Cer R.Z."/>
            <person name="Jiang L."/>
            <person name="Shores K.A."/>
            <person name="Fouts D.E."/>
            <person name="Tourasse N.J."/>
            <person name="Angiuoli S.V."/>
            <person name="Kolonay J.F."/>
            <person name="Nelson W.C."/>
            <person name="Kolstoe A.-B."/>
            <person name="Fraser C.M."/>
            <person name="Read T.D."/>
        </authorList>
    </citation>
    <scope>NUCLEOTIDE SEQUENCE [LARGE SCALE GENOMIC DNA]</scope>
    <source>
        <strain>ATCC 10987 / NRS 248</strain>
    </source>
</reference>
<proteinExistence type="predicted"/>
<protein>
    <recommendedName>
        <fullName>Uncharacterized HTH-type transcriptional regulator BCE_2019</fullName>
    </recommendedName>
</protein>
<evidence type="ECO:0000255" key="1">
    <source>
        <dbReference type="PROSITE-ProRule" id="PRU00345"/>
    </source>
</evidence>
<organism>
    <name type="scientific">Bacillus cereus (strain ATCC 10987 / NRS 248)</name>
    <dbReference type="NCBI Taxonomy" id="222523"/>
    <lineage>
        <taxon>Bacteria</taxon>
        <taxon>Bacillati</taxon>
        <taxon>Bacillota</taxon>
        <taxon>Bacilli</taxon>
        <taxon>Bacillales</taxon>
        <taxon>Bacillaceae</taxon>
        <taxon>Bacillus</taxon>
        <taxon>Bacillus cereus group</taxon>
    </lineage>
</organism>
<dbReference type="EMBL" id="AE017194">
    <property type="protein sequence ID" value="AAS40943.1"/>
    <property type="molecule type" value="Genomic_DNA"/>
</dbReference>
<dbReference type="SMR" id="Q739W8"/>
<dbReference type="KEGG" id="bca:BCE_2019"/>
<dbReference type="HOGENOM" id="CLU_083287_27_2_9"/>
<dbReference type="Proteomes" id="UP000002527">
    <property type="component" value="Chromosome"/>
</dbReference>
<dbReference type="GO" id="GO:0003677">
    <property type="term" value="F:DNA binding"/>
    <property type="evidence" value="ECO:0007669"/>
    <property type="project" value="UniProtKB-KW"/>
</dbReference>
<dbReference type="GO" id="GO:0003700">
    <property type="term" value="F:DNA-binding transcription factor activity"/>
    <property type="evidence" value="ECO:0007669"/>
    <property type="project" value="InterPro"/>
</dbReference>
<dbReference type="CDD" id="cd00090">
    <property type="entry name" value="HTH_ARSR"/>
    <property type="match status" value="1"/>
</dbReference>
<dbReference type="FunFam" id="1.10.10.10:FF:000281">
    <property type="entry name" value="MarR family transcriptional regulator"/>
    <property type="match status" value="1"/>
</dbReference>
<dbReference type="Gene3D" id="1.10.10.10">
    <property type="entry name" value="Winged helix-like DNA-binding domain superfamily/Winged helix DNA-binding domain"/>
    <property type="match status" value="1"/>
</dbReference>
<dbReference type="InterPro" id="IPR011991">
    <property type="entry name" value="ArsR-like_HTH"/>
</dbReference>
<dbReference type="InterPro" id="IPR000835">
    <property type="entry name" value="HTH_MarR-typ"/>
</dbReference>
<dbReference type="InterPro" id="IPR036388">
    <property type="entry name" value="WH-like_DNA-bd_sf"/>
</dbReference>
<dbReference type="InterPro" id="IPR036390">
    <property type="entry name" value="WH_DNA-bd_sf"/>
</dbReference>
<dbReference type="PANTHER" id="PTHR42756">
    <property type="entry name" value="TRANSCRIPTIONAL REGULATOR, MARR"/>
    <property type="match status" value="1"/>
</dbReference>
<dbReference type="PANTHER" id="PTHR42756:SF1">
    <property type="entry name" value="TRANSCRIPTIONAL REPRESSOR OF EMRAB OPERON"/>
    <property type="match status" value="1"/>
</dbReference>
<dbReference type="Pfam" id="PF01047">
    <property type="entry name" value="MarR"/>
    <property type="match status" value="1"/>
</dbReference>
<dbReference type="PRINTS" id="PR00598">
    <property type="entry name" value="HTHMARR"/>
</dbReference>
<dbReference type="SMART" id="SM00347">
    <property type="entry name" value="HTH_MARR"/>
    <property type="match status" value="1"/>
</dbReference>
<dbReference type="SUPFAM" id="SSF46785">
    <property type="entry name" value="Winged helix' DNA-binding domain"/>
    <property type="match status" value="1"/>
</dbReference>
<dbReference type="PROSITE" id="PS50995">
    <property type="entry name" value="HTH_MARR_2"/>
    <property type="match status" value="1"/>
</dbReference>
<gene>
    <name type="ordered locus">BCE_2019</name>
</gene>
<feature type="chain" id="PRO_0000293591" description="Uncharacterized HTH-type transcriptional regulator BCE_2019">
    <location>
        <begin position="1"/>
        <end position="147"/>
    </location>
</feature>
<feature type="domain" description="HTH marR-type" evidence="1">
    <location>
        <begin position="1"/>
        <end position="137"/>
    </location>
</feature>
<feature type="DNA-binding region" description="H-T-H motif" evidence="1">
    <location>
        <begin position="53"/>
        <end position="76"/>
    </location>
</feature>